<dbReference type="EMBL" id="DP000617">
    <property type="protein sequence ID" value="ACA51068.1"/>
    <property type="molecule type" value="Genomic_DNA"/>
</dbReference>
<dbReference type="SMR" id="B1MT31"/>
<dbReference type="MEROPS" id="S54.952"/>
<dbReference type="GlyCosmos" id="B1MT31">
    <property type="glycosylation" value="1 site, No reported glycans"/>
</dbReference>
<dbReference type="GO" id="GO:0005789">
    <property type="term" value="C:endoplasmic reticulum membrane"/>
    <property type="evidence" value="ECO:0000250"/>
    <property type="project" value="UniProtKB"/>
</dbReference>
<dbReference type="GO" id="GO:0000139">
    <property type="term" value="C:Golgi membrane"/>
    <property type="evidence" value="ECO:0000250"/>
    <property type="project" value="UniProtKB"/>
</dbReference>
<dbReference type="GO" id="GO:0019838">
    <property type="term" value="F:growth factor binding"/>
    <property type="evidence" value="ECO:0007669"/>
    <property type="project" value="UniProtKB-KW"/>
</dbReference>
<dbReference type="GO" id="GO:0004252">
    <property type="term" value="F:serine-type endopeptidase activity"/>
    <property type="evidence" value="ECO:0007669"/>
    <property type="project" value="InterPro"/>
</dbReference>
<dbReference type="GO" id="GO:0016477">
    <property type="term" value="P:cell migration"/>
    <property type="evidence" value="ECO:0000250"/>
    <property type="project" value="UniProtKB"/>
</dbReference>
<dbReference type="GO" id="GO:0008283">
    <property type="term" value="P:cell population proliferation"/>
    <property type="evidence" value="ECO:0000250"/>
    <property type="project" value="UniProtKB"/>
</dbReference>
<dbReference type="GO" id="GO:0050709">
    <property type="term" value="P:negative regulation of protein secretion"/>
    <property type="evidence" value="ECO:0000250"/>
    <property type="project" value="UniProtKB"/>
</dbReference>
<dbReference type="GO" id="GO:0015031">
    <property type="term" value="P:protein transport"/>
    <property type="evidence" value="ECO:0007669"/>
    <property type="project" value="UniProtKB-KW"/>
</dbReference>
<dbReference type="GO" id="GO:0042058">
    <property type="term" value="P:regulation of epidermal growth factor receptor signaling pathway"/>
    <property type="evidence" value="ECO:0000250"/>
    <property type="project" value="UniProtKB"/>
</dbReference>
<dbReference type="GO" id="GO:0061136">
    <property type="term" value="P:regulation of proteasomal protein catabolic process"/>
    <property type="evidence" value="ECO:0000250"/>
    <property type="project" value="UniProtKB"/>
</dbReference>
<dbReference type="FunFam" id="1.20.1540.10:FF:000001">
    <property type="entry name" value="Putative inactive rhomboid protein 1"/>
    <property type="match status" value="1"/>
</dbReference>
<dbReference type="Gene3D" id="1.20.1540.10">
    <property type="entry name" value="Rhomboid-like"/>
    <property type="match status" value="1"/>
</dbReference>
<dbReference type="InterPro" id="IPR051512">
    <property type="entry name" value="Inactive_Rhomboid"/>
</dbReference>
<dbReference type="InterPro" id="IPR022241">
    <property type="entry name" value="iRhom1_2_N"/>
</dbReference>
<dbReference type="InterPro" id="IPR022764">
    <property type="entry name" value="Peptidase_S54_rhomboid_dom"/>
</dbReference>
<dbReference type="InterPro" id="IPR035952">
    <property type="entry name" value="Rhomboid-like_sf"/>
</dbReference>
<dbReference type="PANTHER" id="PTHR45965">
    <property type="entry name" value="INACTIVE RHOMBOID PROTEIN"/>
    <property type="match status" value="1"/>
</dbReference>
<dbReference type="PANTHER" id="PTHR45965:SF4">
    <property type="entry name" value="INACTIVE RHOMBOID PROTEIN 1"/>
    <property type="match status" value="1"/>
</dbReference>
<dbReference type="Pfam" id="PF12595">
    <property type="entry name" value="iRhom1-2_N"/>
    <property type="match status" value="1"/>
</dbReference>
<dbReference type="Pfam" id="PF01694">
    <property type="entry name" value="Rhomboid"/>
    <property type="match status" value="1"/>
</dbReference>
<dbReference type="SUPFAM" id="SSF144091">
    <property type="entry name" value="Rhomboid-like"/>
    <property type="match status" value="1"/>
</dbReference>
<reference key="1">
    <citation type="submission" date="2008-03" db="EMBL/GenBank/DDBJ databases">
        <title>NISC comparative sequencing initiative.</title>
        <authorList>
            <person name="Antonellis A."/>
            <person name="Benjamin B."/>
            <person name="Blakesley R.W."/>
            <person name="Bouffard G.G."/>
            <person name="Brinkley C."/>
            <person name="Brooks S."/>
            <person name="Chu G."/>
            <person name="Chub I."/>
            <person name="Coleman H."/>
            <person name="Fuksenko T."/>
            <person name="Gestole M."/>
            <person name="Gregory M."/>
            <person name="Guan X."/>
            <person name="Gupta J."/>
            <person name="Gurson N."/>
            <person name="Han E."/>
            <person name="Han J."/>
            <person name="Hansen N."/>
            <person name="Hargrove A."/>
            <person name="Hines-Harris K."/>
            <person name="Ho S.-L."/>
            <person name="Hu P."/>
            <person name="Hunter G."/>
            <person name="Hurle B."/>
            <person name="Idol J.R."/>
            <person name="Johnson T."/>
            <person name="Knight E."/>
            <person name="Kwong P."/>
            <person name="Lee-Lin S.-Q."/>
            <person name="Legaspi R."/>
            <person name="Madden M."/>
            <person name="Maduro Q.L."/>
            <person name="Maduro V.B."/>
            <person name="Margulies E.H."/>
            <person name="Masiello C."/>
            <person name="Maskeri B."/>
            <person name="McDowell J."/>
            <person name="Merkulov G."/>
            <person name="Montemayor C."/>
            <person name="Mullikin J.C."/>
            <person name="Park M."/>
            <person name="Prasad A."/>
            <person name="Ramsahoye C."/>
            <person name="Reddix-Dugue N."/>
            <person name="Riebow N."/>
            <person name="Schandler K."/>
            <person name="Schueler M.G."/>
            <person name="Sison C."/>
            <person name="Smith L."/>
            <person name="Stantripop S."/>
            <person name="Thomas J.W."/>
            <person name="Thomas P.J."/>
            <person name="Tsipouri V."/>
            <person name="Young A."/>
            <person name="Green E.D."/>
        </authorList>
    </citation>
    <scope>NUCLEOTIDE SEQUENCE [LARGE SCALE GENOMIC DNA]</scope>
</reference>
<proteinExistence type="inferred from homology"/>
<evidence type="ECO:0000250" key="1">
    <source>
        <dbReference type="UniProtKB" id="Q6PIX5"/>
    </source>
</evidence>
<evidence type="ECO:0000250" key="2">
    <source>
        <dbReference type="UniProtKB" id="Q96CC6"/>
    </source>
</evidence>
<evidence type="ECO:0000255" key="3"/>
<evidence type="ECO:0000256" key="4">
    <source>
        <dbReference type="SAM" id="MobiDB-lite"/>
    </source>
</evidence>
<evidence type="ECO:0000305" key="5"/>
<name>RHDF1_PLEMO</name>
<comment type="function">
    <text evidence="2">Regulates ADAM17 protease, a sheddase of the epidermal growth factor (EGF) receptor ligands and TNF, thereby plays a role in sleep, cell survival, proliferation, migration and inflammation. Does not exhibit any protease activity on its own.</text>
</comment>
<comment type="subunit">
    <text evidence="2">Homodimer, or homooligomer. Interacts with TGFA and HBEGF. Interacts with EGF; may retain EGF in the endoplasmic reticulum and regulates its degradation through the endoplasmic reticulum-associated degradation (ERAD). Interacts (via cytoplasmic N-terminus) with FRMD8/iTAP; this interaction leads to mutual protein stabilization. Interacts with ADAM17/TACE.</text>
</comment>
<comment type="subcellular location">
    <subcellularLocation>
        <location evidence="2">Endoplasmic reticulum membrane</location>
        <topology evidence="3">Multi-pass membrane protein</topology>
    </subcellularLocation>
    <subcellularLocation>
        <location evidence="2">Golgi apparatus membrane</location>
        <topology evidence="3">Multi-pass membrane protein</topology>
    </subcellularLocation>
    <text evidence="2">Predominantly localized in the endoplasmic reticulum membrane.</text>
</comment>
<comment type="similarity">
    <text evidence="5">Belongs to the peptidase S54 family.</text>
</comment>
<feature type="chain" id="PRO_0000340107" description="Inactive rhomboid protein 1">
    <location>
        <begin position="1"/>
        <end position="855"/>
    </location>
</feature>
<feature type="topological domain" description="Cytoplasmic" evidence="3">
    <location>
        <begin position="1"/>
        <end position="411"/>
    </location>
</feature>
<feature type="transmembrane region" description="Helical" evidence="3">
    <location>
        <begin position="412"/>
        <end position="432"/>
    </location>
</feature>
<feature type="topological domain" description="Lumenal" evidence="3">
    <location>
        <begin position="433"/>
        <end position="655"/>
    </location>
</feature>
<feature type="transmembrane region" description="Helical" evidence="3">
    <location>
        <begin position="656"/>
        <end position="676"/>
    </location>
</feature>
<feature type="topological domain" description="Cytoplasmic" evidence="3">
    <location>
        <begin position="677"/>
        <end position="691"/>
    </location>
</feature>
<feature type="transmembrane region" description="Helical" evidence="3">
    <location>
        <begin position="692"/>
        <end position="712"/>
    </location>
</feature>
<feature type="topological domain" description="Lumenal" evidence="3">
    <location>
        <begin position="713"/>
        <end position="714"/>
    </location>
</feature>
<feature type="transmembrane region" description="Helical" evidence="3">
    <location>
        <begin position="715"/>
        <end position="735"/>
    </location>
</feature>
<feature type="topological domain" description="Cytoplasmic" evidence="3">
    <location>
        <begin position="736"/>
        <end position="746"/>
    </location>
</feature>
<feature type="transmembrane region" description="Helical" evidence="3">
    <location>
        <begin position="747"/>
        <end position="767"/>
    </location>
</feature>
<feature type="topological domain" description="Lumenal" evidence="3">
    <location>
        <begin position="768"/>
        <end position="772"/>
    </location>
</feature>
<feature type="transmembrane region" description="Helical" evidence="3">
    <location>
        <begin position="773"/>
        <end position="793"/>
    </location>
</feature>
<feature type="topological domain" description="Cytoplasmic" evidence="3">
    <location>
        <begin position="794"/>
        <end position="803"/>
    </location>
</feature>
<feature type="transmembrane region" description="Helical" evidence="3">
    <location>
        <begin position="804"/>
        <end position="824"/>
    </location>
</feature>
<feature type="topological domain" description="Lumenal" evidence="3">
    <location>
        <begin position="825"/>
        <end position="855"/>
    </location>
</feature>
<feature type="region of interest" description="Disordered" evidence="4">
    <location>
        <begin position="1"/>
        <end position="36"/>
    </location>
</feature>
<feature type="compositionally biased region" description="Low complexity" evidence="4">
    <location>
        <begin position="25"/>
        <end position="36"/>
    </location>
</feature>
<feature type="modified residue" description="Phosphoserine" evidence="2">
    <location>
        <position position="76"/>
    </location>
</feature>
<feature type="modified residue" description="Phosphoserine" evidence="1">
    <location>
        <position position="176"/>
    </location>
</feature>
<feature type="modified residue" description="Phosphothreonine" evidence="1">
    <location>
        <position position="180"/>
    </location>
</feature>
<feature type="modified residue" description="Phosphothreonine" evidence="1">
    <location>
        <position position="183"/>
    </location>
</feature>
<feature type="modified residue" description="Phosphoserine" evidence="2">
    <location>
        <position position="390"/>
    </location>
</feature>
<feature type="glycosylation site" description="N-linked (GlcNAc...) asparagine" evidence="3">
    <location>
        <position position="583"/>
    </location>
</feature>
<accession>B1MT31</accession>
<gene>
    <name type="primary">RHBDF1</name>
</gene>
<protein>
    <recommendedName>
        <fullName>Inactive rhomboid protein 1</fullName>
        <shortName>iRhom1</shortName>
    </recommendedName>
    <alternativeName>
        <fullName>Rhomboid family member 1</fullName>
    </alternativeName>
</protein>
<organism>
    <name type="scientific">Plecturocebus moloch</name>
    <name type="common">Dusky titi monkey</name>
    <name type="synonym">Callicebus moloch</name>
    <dbReference type="NCBI Taxonomy" id="9523"/>
    <lineage>
        <taxon>Eukaryota</taxon>
        <taxon>Metazoa</taxon>
        <taxon>Chordata</taxon>
        <taxon>Craniata</taxon>
        <taxon>Vertebrata</taxon>
        <taxon>Euteleostomi</taxon>
        <taxon>Mammalia</taxon>
        <taxon>Eutheria</taxon>
        <taxon>Euarchontoglires</taxon>
        <taxon>Primates</taxon>
        <taxon>Haplorrhini</taxon>
        <taxon>Platyrrhini</taxon>
        <taxon>Pitheciidae</taxon>
        <taxon>Callicebinae</taxon>
        <taxon>Plecturocebus</taxon>
    </lineage>
</organism>
<sequence length="855" mass="97273">MSEARRDSTSSLQRKKPPWLKLDIPSAAPPAAEEPSFLQPLRRQVFLRSVSMPAETAHISSPHCELRRPVLQRQTSITQTIRRGAADWFGVSKESESTQKWQRKSIRHCSQRYGKLKPQVLRELDLPSQDNVSLTSTETPPPLYVGPCQLGMQKIIDPLARGRAFRVADDAAEGLSAPHTPVTPGAASLCSFSSSRSGFHRLPRRRKRESVAKMSFRAAAALMKGRSVRDGTLRRAQRRSFTPASFLEEDTTDFPDELDTSFFAREGILHEELSTYPDEVFESPSEAALKDWEKAPEQADLTGGALDRSELERSHLMLPLERGWRKQKEGAAAPQPKVRLRQEVVSTAGPRRGQRIAVPVRKLFAREKRPYGLGMVGRLTNRTYRKRIDSFVKRQIEDMDDHRPFFTYWLTFVHSLVTVLAVCIYGIAPVGFSQHETVDSVLRNRGVYENVKYVQQENFWIGPSSEALIHLGAKFSPCMRQDPQVHSFIRAAREREKHSACCVRNDRSGCVQTSEEECSSTLAVWVKWPVHPSAPELAGHKRQFGSVCHQDPRVCDEPSSEDPHEWPEDITRWPICTKNSAGNHTNHPHMDCVITGRPCCIGTKGRCEITSREYCDFMRGYFHEEATLCSQVHCMDDVCGLLPFLNPEVPDQFYRLWLSLFLHAGILHCLVSICFQMTVLRDLEKLAGWHRIAIIYLLSGVTGNLASAIFLPYRAEVGPAGSQFGILACLFVELFQSWQILARPWRAFFKLLAVVLFLFTFGLLPWIDNFAHISGFISGLFLSFAFLPYISFGKFDLYRKRCQIIVFQVVFLGLLAGLVVLFYFYPVRCEWCEFLTCIPFTDKFCEKYELDAQLH</sequence>
<keyword id="KW-0256">Endoplasmic reticulum</keyword>
<keyword id="KW-0325">Glycoprotein</keyword>
<keyword id="KW-0333">Golgi apparatus</keyword>
<keyword id="KW-0340">Growth factor binding</keyword>
<keyword id="KW-0472">Membrane</keyword>
<keyword id="KW-0597">Phosphoprotein</keyword>
<keyword id="KW-0653">Protein transport</keyword>
<keyword id="KW-0812">Transmembrane</keyword>
<keyword id="KW-1133">Transmembrane helix</keyword>
<keyword id="KW-0813">Transport</keyword>